<organism>
    <name type="scientific">Halobacterium salinarum (strain ATCC 29341 / DSM 671 / R1)</name>
    <dbReference type="NCBI Taxonomy" id="478009"/>
    <lineage>
        <taxon>Archaea</taxon>
        <taxon>Methanobacteriati</taxon>
        <taxon>Methanobacteriota</taxon>
        <taxon>Stenosarchaea group</taxon>
        <taxon>Halobacteria</taxon>
        <taxon>Halobacteriales</taxon>
        <taxon>Halobacteriaceae</taxon>
        <taxon>Halobacterium</taxon>
        <taxon>Halobacterium salinarum NRC-34001</taxon>
    </lineage>
</organism>
<comment type="function">
    <text evidence="1">Involved in the transposition of the insertion sequence ISH11.</text>
</comment>
<comment type="similarity">
    <text evidence="2">Belongs to the transposase 11 family.</text>
</comment>
<comment type="sequence caution" evidence="2">
    <conflict type="erroneous initiation">
        <sequence resource="EMBL-CDS" id="CAA38554"/>
    </conflict>
    <text>Extended N-terminus.</text>
</comment>
<feature type="chain" id="PRO_0000409674" description="Probable transposase for insertion sequence element ISH11">
    <location>
        <begin position="1"/>
        <end position="330"/>
    </location>
</feature>
<evidence type="ECO:0000250" key="1"/>
<evidence type="ECO:0000305" key="2"/>
<protein>
    <recommendedName>
        <fullName>Probable transposase for insertion sequence element ISH11</fullName>
    </recommendedName>
</protein>
<sequence>MSPATLQDDPSVDSFFNVVETETLALFEHLSFEFLEEFDVFAPAETGRTRDHEPPELMRGFLHCYYKDIYGIRPVERELRNTVVWLSCGFDRPPSRDAVDRFLTDLEHVVNKVFDHLVEQAALRGLLDLTYCIDSTDVRAMPADQDASKCYDPTDDEYYHGYGCTIVSTGQKIPIAAEFTESKQAPEETAMRVTRDALAVAKPIWMVGDSAYDTLDWHDHLLAAGVVPVAPYNARNTDDPKDIEYRVEDRIEQHSEDVQLKQSTLDETYNRRTGVERTNESVKDCGLGRTHARGRVHARAQVFLALCLRLVVAITNYERGDNPGSPIITV</sequence>
<geneLocation type="plasmid">
    <name>PHS2</name>
</geneLocation>
<geneLocation type="plasmid">
    <name>pGRB1</name>
</geneLocation>
<accession>B0R9H2</accession>
<accession>P23464</accession>
<accession>Q9HI33</accession>
<dbReference type="EMBL" id="X54752">
    <property type="protein sequence ID" value="CAA38554.1"/>
    <property type="status" value="ALT_INIT"/>
    <property type="molecule type" value="Genomic_DNA"/>
</dbReference>
<dbReference type="EMBL" id="AM774417">
    <property type="protein sequence ID" value="CAP15258.2"/>
    <property type="molecule type" value="Genomic_DNA"/>
</dbReference>
<dbReference type="PIR" id="T08253">
    <property type="entry name" value="T08253"/>
</dbReference>
<dbReference type="RefSeq" id="WP_010903158.1">
    <property type="nucleotide sequence ID" value="NC_010369.1"/>
</dbReference>
<dbReference type="EnsemblBacteria" id="CAP15258">
    <property type="protein sequence ID" value="CAP15258"/>
    <property type="gene ID" value="OE_6107R"/>
</dbReference>
<dbReference type="KEGG" id="hsl:OE_6107R"/>
<dbReference type="HOGENOM" id="CLU_076514_0_0_2"/>
<dbReference type="Proteomes" id="UP000001321">
    <property type="component" value="Plasmid PHS2"/>
</dbReference>
<dbReference type="GO" id="GO:0003677">
    <property type="term" value="F:DNA binding"/>
    <property type="evidence" value="ECO:0007669"/>
    <property type="project" value="UniProtKB-KW"/>
</dbReference>
<dbReference type="GO" id="GO:0004803">
    <property type="term" value="F:transposase activity"/>
    <property type="evidence" value="ECO:0007669"/>
    <property type="project" value="InterPro"/>
</dbReference>
<dbReference type="GO" id="GO:0006313">
    <property type="term" value="P:DNA transposition"/>
    <property type="evidence" value="ECO:0007669"/>
    <property type="project" value="InterPro"/>
</dbReference>
<dbReference type="InterPro" id="IPR002559">
    <property type="entry name" value="Transposase_11"/>
</dbReference>
<dbReference type="Pfam" id="PF01609">
    <property type="entry name" value="DDE_Tnp_1"/>
    <property type="match status" value="1"/>
</dbReference>
<gene>
    <name type="ordered locus">OE_6107R</name>
</gene>
<keyword id="KW-0233">DNA recombination</keyword>
<keyword id="KW-0238">DNA-binding</keyword>
<keyword id="KW-0614">Plasmid</keyword>
<keyword id="KW-0814">Transposable element</keyword>
<keyword id="KW-0815">Transposition</keyword>
<name>TH11_HALS3</name>
<proteinExistence type="inferred from homology"/>
<reference key="1">
    <citation type="journal article" date="1990" name="Nucleic Acids Res.">
        <title>Nucleotide sequence of ISH11, a new Halobacterium halobium insertion element isolated from the plasmid pGRB1.</title>
        <authorList>
            <person name="Krebs M.P."/>
            <person name="RajBhandary U.L."/>
            <person name="Khorana H.G."/>
        </authorList>
    </citation>
    <scope>NUCLEOTIDE SEQUENCE [GENOMIC DNA]</scope>
    <source>
        <strain>ATCC 29341 / DSM 671 / R1</strain>
        <plasmid>pGRB1</plasmid>
    </source>
</reference>
<reference key="2">
    <citation type="journal article" date="2008" name="Genomics">
        <title>Evolution in the laboratory: the genome of Halobacterium salinarum strain R1 compared to that of strain NRC-1.</title>
        <authorList>
            <person name="Pfeiffer F."/>
            <person name="Schuster S.C."/>
            <person name="Broicher A."/>
            <person name="Falb M."/>
            <person name="Palm P."/>
            <person name="Rodewald K."/>
            <person name="Ruepp A."/>
            <person name="Soppa J."/>
            <person name="Tittor J."/>
            <person name="Oesterhelt D."/>
        </authorList>
    </citation>
    <scope>NUCLEOTIDE SEQUENCE [LARGE SCALE GENOMIC DNA]</scope>
    <source>
        <strain>ATCC 29341 / DSM 671 / R1</strain>
        <plasmid>PHS2</plasmid>
    </source>
</reference>